<keyword id="KW-0131">Cell cycle</keyword>
<keyword id="KW-0132">Cell division</keyword>
<keyword id="KW-0342">GTP-binding</keyword>
<keyword id="KW-0460">Magnesium</keyword>
<keyword id="KW-0479">Metal-binding</keyword>
<keyword id="KW-0547">Nucleotide-binding</keyword>
<keyword id="KW-0717">Septation</keyword>
<feature type="chain" id="PRO_1000205131" description="Probable GTP-binding protein EngB">
    <location>
        <begin position="1"/>
        <end position="205"/>
    </location>
</feature>
<feature type="domain" description="EngB-type G" evidence="1">
    <location>
        <begin position="27"/>
        <end position="201"/>
    </location>
</feature>
<feature type="binding site" evidence="1">
    <location>
        <begin position="35"/>
        <end position="42"/>
    </location>
    <ligand>
        <name>GTP</name>
        <dbReference type="ChEBI" id="CHEBI:37565"/>
    </ligand>
</feature>
<feature type="binding site" evidence="1">
    <location>
        <position position="42"/>
    </location>
    <ligand>
        <name>Mg(2+)</name>
        <dbReference type="ChEBI" id="CHEBI:18420"/>
    </ligand>
</feature>
<feature type="binding site" evidence="1">
    <location>
        <begin position="62"/>
        <end position="66"/>
    </location>
    <ligand>
        <name>GTP</name>
        <dbReference type="ChEBI" id="CHEBI:37565"/>
    </ligand>
</feature>
<feature type="binding site" evidence="1">
    <location>
        <position position="64"/>
    </location>
    <ligand>
        <name>Mg(2+)</name>
        <dbReference type="ChEBI" id="CHEBI:18420"/>
    </ligand>
</feature>
<feature type="binding site" evidence="1">
    <location>
        <begin position="80"/>
        <end position="83"/>
    </location>
    <ligand>
        <name>GTP</name>
        <dbReference type="ChEBI" id="CHEBI:37565"/>
    </ligand>
</feature>
<feature type="binding site" evidence="1">
    <location>
        <begin position="147"/>
        <end position="150"/>
    </location>
    <ligand>
        <name>GTP</name>
        <dbReference type="ChEBI" id="CHEBI:37565"/>
    </ligand>
</feature>
<feature type="binding site" evidence="1">
    <location>
        <begin position="180"/>
        <end position="182"/>
    </location>
    <ligand>
        <name>GTP</name>
        <dbReference type="ChEBI" id="CHEBI:37565"/>
    </ligand>
</feature>
<proteinExistence type="inferred from homology"/>
<gene>
    <name evidence="1" type="primary">engB</name>
    <name type="ordered locus">HDEF_0097</name>
</gene>
<name>ENGB_HAMD5</name>
<accession>C4K8N5</accession>
<evidence type="ECO:0000255" key="1">
    <source>
        <dbReference type="HAMAP-Rule" id="MF_00321"/>
    </source>
</evidence>
<organism>
    <name type="scientific">Hamiltonella defensa subsp. Acyrthosiphon pisum (strain 5AT)</name>
    <dbReference type="NCBI Taxonomy" id="572265"/>
    <lineage>
        <taxon>Bacteria</taxon>
        <taxon>Pseudomonadati</taxon>
        <taxon>Pseudomonadota</taxon>
        <taxon>Gammaproteobacteria</taxon>
        <taxon>Enterobacterales</taxon>
        <taxon>Enterobacteriaceae</taxon>
        <taxon>aphid secondary symbionts</taxon>
        <taxon>Candidatus Hamiltonella</taxon>
    </lineage>
</organism>
<reference key="1">
    <citation type="journal article" date="2009" name="Proc. Natl. Acad. Sci. U.S.A.">
        <title>Hamiltonella defensa, genome evolution of protective bacterial endosymbiont from pathogenic ancestors.</title>
        <authorList>
            <person name="Degnan P.H."/>
            <person name="Yu Y."/>
            <person name="Sisneros N."/>
            <person name="Wing R.A."/>
            <person name="Moran N.A."/>
        </authorList>
    </citation>
    <scope>NUCLEOTIDE SEQUENCE [LARGE SCALE GENOMIC DNA]</scope>
    <source>
        <strain>5AT</strain>
    </source>
</reference>
<protein>
    <recommendedName>
        <fullName evidence="1">Probable GTP-binding protein EngB</fullName>
    </recommendedName>
</protein>
<comment type="function">
    <text evidence="1">Necessary for normal cell division and for the maintenance of normal septation.</text>
</comment>
<comment type="cofactor">
    <cofactor evidence="1">
        <name>Mg(2+)</name>
        <dbReference type="ChEBI" id="CHEBI:18420"/>
    </cofactor>
</comment>
<comment type="similarity">
    <text evidence="1">Belongs to the TRAFAC class TrmE-Era-EngA-EngB-Septin-like GTPase superfamily. EngB GTPase family.</text>
</comment>
<dbReference type="EMBL" id="CP001277">
    <property type="protein sequence ID" value="ACQ66872.1"/>
    <property type="molecule type" value="Genomic_DNA"/>
</dbReference>
<dbReference type="SMR" id="C4K8N5"/>
<dbReference type="STRING" id="572265.HDEF_0097"/>
<dbReference type="KEGG" id="hde:HDEF_0097"/>
<dbReference type="eggNOG" id="COG0218">
    <property type="taxonomic scope" value="Bacteria"/>
</dbReference>
<dbReference type="HOGENOM" id="CLU_033732_1_0_6"/>
<dbReference type="Proteomes" id="UP000002334">
    <property type="component" value="Chromosome"/>
</dbReference>
<dbReference type="GO" id="GO:0005829">
    <property type="term" value="C:cytosol"/>
    <property type="evidence" value="ECO:0007669"/>
    <property type="project" value="TreeGrafter"/>
</dbReference>
<dbReference type="GO" id="GO:0005525">
    <property type="term" value="F:GTP binding"/>
    <property type="evidence" value="ECO:0007669"/>
    <property type="project" value="UniProtKB-UniRule"/>
</dbReference>
<dbReference type="GO" id="GO:0046872">
    <property type="term" value="F:metal ion binding"/>
    <property type="evidence" value="ECO:0007669"/>
    <property type="project" value="UniProtKB-KW"/>
</dbReference>
<dbReference type="GO" id="GO:0000917">
    <property type="term" value="P:division septum assembly"/>
    <property type="evidence" value="ECO:0007669"/>
    <property type="project" value="UniProtKB-KW"/>
</dbReference>
<dbReference type="CDD" id="cd01876">
    <property type="entry name" value="YihA_EngB"/>
    <property type="match status" value="1"/>
</dbReference>
<dbReference type="FunFam" id="3.40.50.300:FF:000098">
    <property type="entry name" value="Probable GTP-binding protein EngB"/>
    <property type="match status" value="1"/>
</dbReference>
<dbReference type="Gene3D" id="3.40.50.300">
    <property type="entry name" value="P-loop containing nucleotide triphosphate hydrolases"/>
    <property type="match status" value="1"/>
</dbReference>
<dbReference type="HAMAP" id="MF_00321">
    <property type="entry name" value="GTPase_EngB"/>
    <property type="match status" value="1"/>
</dbReference>
<dbReference type="InterPro" id="IPR030393">
    <property type="entry name" value="G_ENGB_dom"/>
</dbReference>
<dbReference type="InterPro" id="IPR006073">
    <property type="entry name" value="GTP-bd"/>
</dbReference>
<dbReference type="InterPro" id="IPR019987">
    <property type="entry name" value="GTP-bd_ribosome_bio_YsxC"/>
</dbReference>
<dbReference type="InterPro" id="IPR027417">
    <property type="entry name" value="P-loop_NTPase"/>
</dbReference>
<dbReference type="NCBIfam" id="TIGR03598">
    <property type="entry name" value="GTPase_YsxC"/>
    <property type="match status" value="1"/>
</dbReference>
<dbReference type="PANTHER" id="PTHR11649:SF13">
    <property type="entry name" value="ENGB-TYPE G DOMAIN-CONTAINING PROTEIN"/>
    <property type="match status" value="1"/>
</dbReference>
<dbReference type="PANTHER" id="PTHR11649">
    <property type="entry name" value="MSS1/TRME-RELATED GTP-BINDING PROTEIN"/>
    <property type="match status" value="1"/>
</dbReference>
<dbReference type="Pfam" id="PF01926">
    <property type="entry name" value="MMR_HSR1"/>
    <property type="match status" value="1"/>
</dbReference>
<dbReference type="SUPFAM" id="SSF52540">
    <property type="entry name" value="P-loop containing nucleoside triphosphate hydrolases"/>
    <property type="match status" value="1"/>
</dbReference>
<dbReference type="PROSITE" id="PS51706">
    <property type="entry name" value="G_ENGB"/>
    <property type="match status" value="1"/>
</dbReference>
<sequence length="205" mass="23041">MKKTNDNYHSARFVMSAPNIHHLPPDQGMEVAFAGRSNAGKSSALNTLTQQKNLAKISKTPGRTQLINLFEVAEGIRLVDLPGYGYAAVPLAIKIKWQKALNEYLNKRDCLRGLVILMDIRHPLKNLDQQMIVWAINKRIPVYLLLTKVDKLSRSASKIQLDMVKEAILPFMGDIEVDVFSSLKKIGIDKLQNKLNAWFSGSVNE</sequence>